<keyword id="KW-0227">DNA damage</keyword>
<keyword id="KW-0234">DNA repair</keyword>
<keyword id="KW-1185">Reference proteome</keyword>
<accession>B4SGC3</accession>
<reference key="1">
    <citation type="submission" date="2008-06" db="EMBL/GenBank/DDBJ databases">
        <title>Complete sequence of Pelodictyon phaeoclathratiforme BU-1.</title>
        <authorList>
            <consortium name="US DOE Joint Genome Institute"/>
            <person name="Lucas S."/>
            <person name="Copeland A."/>
            <person name="Lapidus A."/>
            <person name="Glavina del Rio T."/>
            <person name="Dalin E."/>
            <person name="Tice H."/>
            <person name="Bruce D."/>
            <person name="Goodwin L."/>
            <person name="Pitluck S."/>
            <person name="Schmutz J."/>
            <person name="Larimer F."/>
            <person name="Land M."/>
            <person name="Hauser L."/>
            <person name="Kyrpides N."/>
            <person name="Mikhailova N."/>
            <person name="Liu Z."/>
            <person name="Li T."/>
            <person name="Zhao F."/>
            <person name="Overmann J."/>
            <person name="Bryant D.A."/>
            <person name="Richardson P."/>
        </authorList>
    </citation>
    <scope>NUCLEOTIDE SEQUENCE [LARGE SCALE GENOMIC DNA]</scope>
    <source>
        <strain>DSM 5477 / BU-1</strain>
    </source>
</reference>
<proteinExistence type="inferred from homology"/>
<dbReference type="EMBL" id="CP001110">
    <property type="protein sequence ID" value="ACF44859.1"/>
    <property type="molecule type" value="Genomic_DNA"/>
</dbReference>
<dbReference type="RefSeq" id="WP_012509331.1">
    <property type="nucleotide sequence ID" value="NC_011060.1"/>
</dbReference>
<dbReference type="SMR" id="B4SGC3"/>
<dbReference type="STRING" id="324925.Ppha_2701"/>
<dbReference type="KEGG" id="pph:Ppha_2701"/>
<dbReference type="eggNOG" id="COG0323">
    <property type="taxonomic scope" value="Bacteria"/>
</dbReference>
<dbReference type="HOGENOM" id="CLU_004131_4_2_10"/>
<dbReference type="OrthoDB" id="9763467at2"/>
<dbReference type="Proteomes" id="UP000002724">
    <property type="component" value="Chromosome"/>
</dbReference>
<dbReference type="GO" id="GO:0032300">
    <property type="term" value="C:mismatch repair complex"/>
    <property type="evidence" value="ECO:0007669"/>
    <property type="project" value="InterPro"/>
</dbReference>
<dbReference type="GO" id="GO:0005524">
    <property type="term" value="F:ATP binding"/>
    <property type="evidence" value="ECO:0007669"/>
    <property type="project" value="InterPro"/>
</dbReference>
<dbReference type="GO" id="GO:0016887">
    <property type="term" value="F:ATP hydrolysis activity"/>
    <property type="evidence" value="ECO:0007669"/>
    <property type="project" value="InterPro"/>
</dbReference>
<dbReference type="GO" id="GO:0140664">
    <property type="term" value="F:ATP-dependent DNA damage sensor activity"/>
    <property type="evidence" value="ECO:0007669"/>
    <property type="project" value="InterPro"/>
</dbReference>
<dbReference type="GO" id="GO:0030983">
    <property type="term" value="F:mismatched DNA binding"/>
    <property type="evidence" value="ECO:0007669"/>
    <property type="project" value="InterPro"/>
</dbReference>
<dbReference type="GO" id="GO:0006298">
    <property type="term" value="P:mismatch repair"/>
    <property type="evidence" value="ECO:0007669"/>
    <property type="project" value="UniProtKB-UniRule"/>
</dbReference>
<dbReference type="CDD" id="cd16926">
    <property type="entry name" value="HATPase_MutL-MLH-PMS-like"/>
    <property type="match status" value="1"/>
</dbReference>
<dbReference type="CDD" id="cd00782">
    <property type="entry name" value="MutL_Trans"/>
    <property type="match status" value="1"/>
</dbReference>
<dbReference type="FunFam" id="3.30.565.10:FF:000003">
    <property type="entry name" value="DNA mismatch repair endonuclease MutL"/>
    <property type="match status" value="1"/>
</dbReference>
<dbReference type="Gene3D" id="3.30.230.10">
    <property type="match status" value="1"/>
</dbReference>
<dbReference type="Gene3D" id="3.30.565.10">
    <property type="entry name" value="Histidine kinase-like ATPase, C-terminal domain"/>
    <property type="match status" value="1"/>
</dbReference>
<dbReference type="Gene3D" id="3.30.1540.20">
    <property type="entry name" value="MutL, C-terminal domain, dimerisation subdomain"/>
    <property type="match status" value="1"/>
</dbReference>
<dbReference type="Gene3D" id="3.30.1370.100">
    <property type="entry name" value="MutL, C-terminal domain, regulatory subdomain"/>
    <property type="match status" value="1"/>
</dbReference>
<dbReference type="HAMAP" id="MF_00149">
    <property type="entry name" value="DNA_mis_repair"/>
    <property type="match status" value="1"/>
</dbReference>
<dbReference type="InterPro" id="IPR014762">
    <property type="entry name" value="DNA_mismatch_repair_CS"/>
</dbReference>
<dbReference type="InterPro" id="IPR020667">
    <property type="entry name" value="DNA_mismatch_repair_MutL"/>
</dbReference>
<dbReference type="InterPro" id="IPR013507">
    <property type="entry name" value="DNA_mismatch_S5_2-like"/>
</dbReference>
<dbReference type="InterPro" id="IPR036890">
    <property type="entry name" value="HATPase_C_sf"/>
</dbReference>
<dbReference type="InterPro" id="IPR002099">
    <property type="entry name" value="MutL/Mlh/PMS"/>
</dbReference>
<dbReference type="InterPro" id="IPR038973">
    <property type="entry name" value="MutL/Mlh/Pms-like"/>
</dbReference>
<dbReference type="InterPro" id="IPR014790">
    <property type="entry name" value="MutL_C"/>
</dbReference>
<dbReference type="InterPro" id="IPR042120">
    <property type="entry name" value="MutL_C_dimsub"/>
</dbReference>
<dbReference type="InterPro" id="IPR042121">
    <property type="entry name" value="MutL_C_regsub"/>
</dbReference>
<dbReference type="InterPro" id="IPR037198">
    <property type="entry name" value="MutL_C_sf"/>
</dbReference>
<dbReference type="InterPro" id="IPR020568">
    <property type="entry name" value="Ribosomal_Su5_D2-typ_SF"/>
</dbReference>
<dbReference type="InterPro" id="IPR014721">
    <property type="entry name" value="Ribsml_uS5_D2-typ_fold_subgr"/>
</dbReference>
<dbReference type="NCBIfam" id="TIGR00585">
    <property type="entry name" value="mutl"/>
    <property type="match status" value="1"/>
</dbReference>
<dbReference type="PANTHER" id="PTHR10073">
    <property type="entry name" value="DNA MISMATCH REPAIR PROTEIN MLH, PMS, MUTL"/>
    <property type="match status" value="1"/>
</dbReference>
<dbReference type="PANTHER" id="PTHR10073:SF12">
    <property type="entry name" value="DNA MISMATCH REPAIR PROTEIN MLH1"/>
    <property type="match status" value="1"/>
</dbReference>
<dbReference type="Pfam" id="PF01119">
    <property type="entry name" value="DNA_mis_repair"/>
    <property type="match status" value="1"/>
</dbReference>
<dbReference type="Pfam" id="PF13589">
    <property type="entry name" value="HATPase_c_3"/>
    <property type="match status" value="1"/>
</dbReference>
<dbReference type="Pfam" id="PF08676">
    <property type="entry name" value="MutL_C"/>
    <property type="match status" value="1"/>
</dbReference>
<dbReference type="SMART" id="SM01340">
    <property type="entry name" value="DNA_mis_repair"/>
    <property type="match status" value="1"/>
</dbReference>
<dbReference type="SMART" id="SM00853">
    <property type="entry name" value="MutL_C"/>
    <property type="match status" value="1"/>
</dbReference>
<dbReference type="SUPFAM" id="SSF55874">
    <property type="entry name" value="ATPase domain of HSP90 chaperone/DNA topoisomerase II/histidine kinase"/>
    <property type="match status" value="1"/>
</dbReference>
<dbReference type="SUPFAM" id="SSF118116">
    <property type="entry name" value="DNA mismatch repair protein MutL"/>
    <property type="match status" value="1"/>
</dbReference>
<dbReference type="SUPFAM" id="SSF54211">
    <property type="entry name" value="Ribosomal protein S5 domain 2-like"/>
    <property type="match status" value="1"/>
</dbReference>
<dbReference type="PROSITE" id="PS00058">
    <property type="entry name" value="DNA_MISMATCH_REPAIR_1"/>
    <property type="match status" value="1"/>
</dbReference>
<gene>
    <name evidence="1" type="primary">mutL</name>
    <name type="ordered locus">Ppha_2701</name>
</gene>
<sequence length="626" mass="71297">MARIARLPDIVANKISAGEVVQRPASVVKELLENAIDAGADKITVAIKDAGKELIRIVDNGAGMLREDALLCVERFATSKITGVDDLDSLQSLGFRGEALASISSVSHFELKTRTAKATLGLRLRYEGGVLVEESGVQGEQGTTISVRNLFYNVPARRKFLKSNATEYNHIFEIVKSFALAYPEIEWRMYSDDEELFHVKRPDILERLNVFYGDDFAASMIELSEENDYLSIKGYLGKPAMQKRRKLDQYFFVNRRVVQNRMLSQAVQQAYGDLLVERQTPFVLLFLTIDPSRIDVNVHPAKMEIRFDDERNVRNMFYPVIKRAIQLHDFSPDLVSTECDQLSSLQPQNSAFRKFSFPDIPHRSITTGDLYRNYREGAVDEPAISRVASAHQGEMFPRHSSADYALAGSGLREGDEGLSSILLAPLYDDDVVPNPKEVEPKIWQLHNKYLICQIKTGLMIIDQHVAHERVLYERAVDVMNQNVPNSQQLLFPQKVEFRPWEYEIFEEIREDLYRLGFNLRLFGNKTIMIEGVPQDVKPGSEVTILQDMIAEYQDNASKLKLDKRDNLAKSYSCRNAIMAGQKLSLEEMRSLIDNLFATREPYSCPHGRPVIIKLSLDQLDKMFGRK</sequence>
<organism>
    <name type="scientific">Pelodictyon phaeoclathratiforme (strain DSM 5477 / BU-1)</name>
    <dbReference type="NCBI Taxonomy" id="324925"/>
    <lineage>
        <taxon>Bacteria</taxon>
        <taxon>Pseudomonadati</taxon>
        <taxon>Chlorobiota</taxon>
        <taxon>Chlorobiia</taxon>
        <taxon>Chlorobiales</taxon>
        <taxon>Chlorobiaceae</taxon>
        <taxon>Chlorobium/Pelodictyon group</taxon>
        <taxon>Pelodictyon</taxon>
    </lineage>
</organism>
<feature type="chain" id="PRO_1000096670" description="DNA mismatch repair protein MutL">
    <location>
        <begin position="1"/>
        <end position="626"/>
    </location>
</feature>
<name>MUTL_PELPB</name>
<evidence type="ECO:0000255" key="1">
    <source>
        <dbReference type="HAMAP-Rule" id="MF_00149"/>
    </source>
</evidence>
<comment type="function">
    <text evidence="1">This protein is involved in the repair of mismatches in DNA. It is required for dam-dependent methyl-directed DNA mismatch repair. May act as a 'molecular matchmaker', a protein that promotes the formation of a stable complex between two or more DNA-binding proteins in an ATP-dependent manner without itself being part of a final effector complex.</text>
</comment>
<comment type="similarity">
    <text evidence="1">Belongs to the DNA mismatch repair MutL/HexB family.</text>
</comment>
<protein>
    <recommendedName>
        <fullName evidence="1">DNA mismatch repair protein MutL</fullName>
    </recommendedName>
</protein>